<comment type="function">
    <text evidence="1">Catalyzes the covalent attachment of the prokaryotic ubiquitin-like protein modifier Pup to the proteasomal substrate proteins, thereby targeting them for proteasomal degradation. This tagging system is termed pupylation. The ligation reaction involves the side-chain carboxylate of the C-terminal glutamate of Pup and the side-chain amino group of a substrate lysine.</text>
</comment>
<comment type="catalytic activity">
    <reaction evidence="1">
        <text>ATP + [prokaryotic ubiquitin-like protein]-L-glutamate + [protein]-L-lysine = ADP + phosphate + N(6)-([prokaryotic ubiquitin-like protein]-gamma-L-glutamyl)-[protein]-L-lysine.</text>
        <dbReference type="EC" id="6.3.1.19"/>
    </reaction>
</comment>
<comment type="pathway">
    <text evidence="1">Protein degradation; proteasomal Pup-dependent pathway.</text>
</comment>
<comment type="pathway">
    <text evidence="1">Protein modification; protein pupylation.</text>
</comment>
<comment type="miscellaneous">
    <text evidence="1">The reaction mechanism probably proceeds via the activation of Pup by phosphorylation of its C-terminal glutamate, which is then subject to nucleophilic attack by the substrate lysine, resulting in an isopeptide bond and the release of phosphate as a good leaving group.</text>
</comment>
<comment type="similarity">
    <text evidence="1">Belongs to the Pup ligase/Pup deamidase family. Pup-conjugating enzyme subfamily.</text>
</comment>
<proteinExistence type="inferred from homology"/>
<dbReference type="EC" id="6.3.1.19" evidence="1"/>
<dbReference type="EMBL" id="AM942444">
    <property type="protein sequence ID" value="CAQ05003.1"/>
    <property type="molecule type" value="Genomic_DNA"/>
</dbReference>
<dbReference type="RefSeq" id="WP_012360291.1">
    <property type="nucleotide sequence ID" value="NC_010545.1"/>
</dbReference>
<dbReference type="SMR" id="B1VDV5"/>
<dbReference type="STRING" id="504474.cu1043"/>
<dbReference type="MEROPS" id="U72.001"/>
<dbReference type="GeneID" id="60603821"/>
<dbReference type="KEGG" id="cur:cu1043"/>
<dbReference type="eggNOG" id="COG0638">
    <property type="taxonomic scope" value="Bacteria"/>
</dbReference>
<dbReference type="HOGENOM" id="CLU_040524_0_1_11"/>
<dbReference type="UniPathway" id="UPA00997"/>
<dbReference type="UniPathway" id="UPA00998"/>
<dbReference type="Proteomes" id="UP000001727">
    <property type="component" value="Chromosome"/>
</dbReference>
<dbReference type="GO" id="GO:0005524">
    <property type="term" value="F:ATP binding"/>
    <property type="evidence" value="ECO:0007669"/>
    <property type="project" value="UniProtKB-UniRule"/>
</dbReference>
<dbReference type="GO" id="GO:0016879">
    <property type="term" value="F:ligase activity, forming carbon-nitrogen bonds"/>
    <property type="evidence" value="ECO:0007669"/>
    <property type="project" value="InterPro"/>
</dbReference>
<dbReference type="GO" id="GO:0000287">
    <property type="term" value="F:magnesium ion binding"/>
    <property type="evidence" value="ECO:0007669"/>
    <property type="project" value="UniProtKB-UniRule"/>
</dbReference>
<dbReference type="GO" id="GO:0019787">
    <property type="term" value="F:ubiquitin-like protein transferase activity"/>
    <property type="evidence" value="ECO:0007669"/>
    <property type="project" value="UniProtKB-UniRule"/>
</dbReference>
<dbReference type="GO" id="GO:0019941">
    <property type="term" value="P:modification-dependent protein catabolic process"/>
    <property type="evidence" value="ECO:0007669"/>
    <property type="project" value="UniProtKB-UniRule"/>
</dbReference>
<dbReference type="GO" id="GO:0010498">
    <property type="term" value="P:proteasomal protein catabolic process"/>
    <property type="evidence" value="ECO:0007669"/>
    <property type="project" value="UniProtKB-UniRule"/>
</dbReference>
<dbReference type="GO" id="GO:0070490">
    <property type="term" value="P:protein pupylation"/>
    <property type="evidence" value="ECO:0007669"/>
    <property type="project" value="UniProtKB-UniRule"/>
</dbReference>
<dbReference type="HAMAP" id="MF_02111">
    <property type="entry name" value="Pup_ligase"/>
    <property type="match status" value="1"/>
</dbReference>
<dbReference type="InterPro" id="IPR022279">
    <property type="entry name" value="Pup_ligase"/>
</dbReference>
<dbReference type="InterPro" id="IPR004347">
    <property type="entry name" value="Pup_ligase/deamidase"/>
</dbReference>
<dbReference type="NCBIfam" id="TIGR03686">
    <property type="entry name" value="pupylate_PafA"/>
    <property type="match status" value="1"/>
</dbReference>
<dbReference type="PANTHER" id="PTHR42307">
    <property type="entry name" value="PUP DEAMIDASE/DEPUPYLASE"/>
    <property type="match status" value="1"/>
</dbReference>
<dbReference type="PANTHER" id="PTHR42307:SF3">
    <property type="entry name" value="PUP--PROTEIN LIGASE"/>
    <property type="match status" value="1"/>
</dbReference>
<dbReference type="Pfam" id="PF03136">
    <property type="entry name" value="Pup_ligase"/>
    <property type="match status" value="1"/>
</dbReference>
<dbReference type="PIRSF" id="PIRSF018077">
    <property type="entry name" value="UCP018077"/>
    <property type="match status" value="1"/>
</dbReference>
<keyword id="KW-0067">ATP-binding</keyword>
<keyword id="KW-0436">Ligase</keyword>
<keyword id="KW-0460">Magnesium</keyword>
<keyword id="KW-0479">Metal-binding</keyword>
<keyword id="KW-0547">Nucleotide-binding</keyword>
<keyword id="KW-1185">Reference proteome</keyword>
<keyword id="KW-0833">Ubl conjugation pathway</keyword>
<feature type="chain" id="PRO_0000395912" description="Pup--protein ligase">
    <location>
        <begin position="1"/>
        <end position="504"/>
    </location>
</feature>
<feature type="active site" description="Proton acceptor" evidence="1">
    <location>
        <position position="78"/>
    </location>
</feature>
<feature type="binding site" evidence="1">
    <location>
        <position position="30"/>
    </location>
    <ligand>
        <name>Mg(2+)</name>
        <dbReference type="ChEBI" id="CHEBI:18420"/>
    </ligand>
</feature>
<feature type="binding site" evidence="1">
    <location>
        <position position="74"/>
    </location>
    <ligand>
        <name>ATP</name>
        <dbReference type="ChEBI" id="CHEBI:30616"/>
    </ligand>
</feature>
<feature type="binding site" evidence="1">
    <location>
        <position position="76"/>
    </location>
    <ligand>
        <name>Mg(2+)</name>
        <dbReference type="ChEBI" id="CHEBI:18420"/>
    </ligand>
</feature>
<feature type="binding site" evidence="1">
    <location>
        <position position="84"/>
    </location>
    <ligand>
        <name>Mg(2+)</name>
        <dbReference type="ChEBI" id="CHEBI:18420"/>
    </ligand>
</feature>
<feature type="binding site" evidence="1">
    <location>
        <position position="87"/>
    </location>
    <ligand>
        <name>ATP</name>
        <dbReference type="ChEBI" id="CHEBI:30616"/>
    </ligand>
</feature>
<feature type="binding site" evidence="1">
    <location>
        <position position="459"/>
    </location>
    <ligand>
        <name>ATP</name>
        <dbReference type="ChEBI" id="CHEBI:30616"/>
    </ligand>
</feature>
<reference key="1">
    <citation type="journal article" date="2008" name="J. Biotechnol.">
        <title>The lifestyle of Corynebacterium urealyticum derived from its complete genome sequence established by pyrosequencing.</title>
        <authorList>
            <person name="Tauch A."/>
            <person name="Trost E."/>
            <person name="Tilker A."/>
            <person name="Ludewig U."/>
            <person name="Schneiker S."/>
            <person name="Goesmann A."/>
            <person name="Arnold W."/>
            <person name="Bekel T."/>
            <person name="Brinkrolf K."/>
            <person name="Brune I."/>
            <person name="Goetker S."/>
            <person name="Kalinowski J."/>
            <person name="Kamp P.-B."/>
            <person name="Lobo F.P."/>
            <person name="Viehoever P."/>
            <person name="Weisshaar B."/>
            <person name="Soriano F."/>
            <person name="Droege M."/>
            <person name="Puehler A."/>
        </authorList>
    </citation>
    <scope>NUCLEOTIDE SEQUENCE [LARGE SCALE GENOMIC DNA]</scope>
    <source>
        <strain>ATCC 43042 / DSM 7109</strain>
    </source>
</reference>
<gene>
    <name evidence="1" type="primary">pafA</name>
    <name type="ordered locus">cu1043</name>
</gene>
<organism>
    <name type="scientific">Corynebacterium urealyticum (strain ATCC 43042 / DSM 7109)</name>
    <dbReference type="NCBI Taxonomy" id="504474"/>
    <lineage>
        <taxon>Bacteria</taxon>
        <taxon>Bacillati</taxon>
        <taxon>Actinomycetota</taxon>
        <taxon>Actinomycetes</taxon>
        <taxon>Mycobacteriales</taxon>
        <taxon>Corynebacteriaceae</taxon>
        <taxon>Corynebacterium</taxon>
    </lineage>
</organism>
<accession>B1VDV5</accession>
<sequence length="504" mass="55735">MSPVTGEETPAEQQGTADNPVYVRRIMGLETEYGITNVLDGTRRLGPDEVSRLLFSPIVEKYRSSNIFTENASRLYLDVGAHPEIATAECDSLHQLLAYDRAGDELVQQLASRAEEELASNGIGGNVFLLKNNTDSMGNSYGCHENYLISRNVLLKHLSSQLLPFLVTRQLICGAGKLTIPSPGAPNENFEAGFMMSQRADYMWEGISSATTRSRPIINTRDEPHADSSKYRRLHVIVGDSNMSETTTALKIGSALLVLEMIEAGAELPNYELANEIRAIRDIARDFTGLTEVKLRSGETATPLEIQRTFHAAAVHWLEHRPEPECVDGRWLGTPREQLAPVVELWGRVLDCFETGDFSPVDTEIDWVIKKKLLHGMASRHGLEMTDPRLAQIDLRYHDIHPARGLFNVLKRRGQAASILGEEQIREAMDQAPATTRAALRGRFLTAAREHGCATTVDWMRLKINGEFGSEVALPNPFAATDPQVDEMIASMADLGDTDATARG</sequence>
<evidence type="ECO:0000255" key="1">
    <source>
        <dbReference type="HAMAP-Rule" id="MF_02111"/>
    </source>
</evidence>
<protein>
    <recommendedName>
        <fullName evidence="1">Pup--protein ligase</fullName>
        <ecNumber evidence="1">6.3.1.19</ecNumber>
    </recommendedName>
    <alternativeName>
        <fullName evidence="1">Proteasome accessory factor A</fullName>
    </alternativeName>
    <alternativeName>
        <fullName evidence="1">Pup-conjugating enzyme</fullName>
    </alternativeName>
</protein>
<name>PAFA_CORU7</name>